<accession>A6Q638</accession>
<gene>
    <name evidence="1" type="primary">frr</name>
    <name type="ordered locus">NIS_1843</name>
</gene>
<feature type="chain" id="PRO_1000003212" description="Ribosome-recycling factor">
    <location>
        <begin position="1"/>
        <end position="186"/>
    </location>
</feature>
<organism>
    <name type="scientific">Nitratiruptor sp. (strain SB155-2)</name>
    <dbReference type="NCBI Taxonomy" id="387092"/>
    <lineage>
        <taxon>Bacteria</taxon>
        <taxon>Pseudomonadati</taxon>
        <taxon>Campylobacterota</taxon>
        <taxon>Epsilonproteobacteria</taxon>
        <taxon>Nautiliales</taxon>
        <taxon>Nitratiruptoraceae</taxon>
        <taxon>Nitratiruptor</taxon>
    </lineage>
</organism>
<evidence type="ECO:0000255" key="1">
    <source>
        <dbReference type="HAMAP-Rule" id="MF_00040"/>
    </source>
</evidence>
<reference key="1">
    <citation type="journal article" date="2007" name="Proc. Natl. Acad. Sci. U.S.A.">
        <title>Deep-sea vent epsilon-proteobacterial genomes provide insights into emergence of pathogens.</title>
        <authorList>
            <person name="Nakagawa S."/>
            <person name="Takaki Y."/>
            <person name="Shimamura S."/>
            <person name="Reysenbach A.-L."/>
            <person name="Takai K."/>
            <person name="Horikoshi K."/>
        </authorList>
    </citation>
    <scope>NUCLEOTIDE SEQUENCE [LARGE SCALE GENOMIC DNA]</scope>
    <source>
        <strain>SB155-2</strain>
    </source>
</reference>
<proteinExistence type="inferred from homology"/>
<comment type="function">
    <text evidence="1">Responsible for the release of ribosomes from messenger RNA at the termination of protein biosynthesis. May increase the efficiency of translation by recycling ribosomes from one round of translation to another.</text>
</comment>
<comment type="subcellular location">
    <subcellularLocation>
        <location evidence="1">Cytoplasm</location>
    </subcellularLocation>
</comment>
<comment type="similarity">
    <text evidence="1">Belongs to the RRF family.</text>
</comment>
<name>RRF_NITSB</name>
<protein>
    <recommendedName>
        <fullName evidence="1">Ribosome-recycling factor</fullName>
        <shortName evidence="1">RRF</shortName>
    </recommendedName>
    <alternativeName>
        <fullName evidence="1">Ribosome-releasing factor</fullName>
    </alternativeName>
</protein>
<sequence length="186" mass="21208">MELNEIYEYARDHMQKSLDVLKKDFNTLRTGRVTTAVVENIKVDYYGAPTPLNQAASVVAADATTIVISPWDKSLLGEIERAIQEANIGVNPNNDGDQIKLFFPPMTVEQREAEAKKAKQFGEKAKIAIRNVRRDANDKIKKLFKDKAITEDEEKRGLEEVQKITDEFIKKVDDLVKQKEQEIMKV</sequence>
<dbReference type="EMBL" id="AP009178">
    <property type="protein sequence ID" value="BAF70947.1"/>
    <property type="molecule type" value="Genomic_DNA"/>
</dbReference>
<dbReference type="RefSeq" id="WP_012083210.1">
    <property type="nucleotide sequence ID" value="NC_009662.1"/>
</dbReference>
<dbReference type="SMR" id="A6Q638"/>
<dbReference type="FunCoup" id="A6Q638">
    <property type="interactions" value="480"/>
</dbReference>
<dbReference type="STRING" id="387092.NIS_1843"/>
<dbReference type="KEGG" id="nis:NIS_1843"/>
<dbReference type="eggNOG" id="COG0233">
    <property type="taxonomic scope" value="Bacteria"/>
</dbReference>
<dbReference type="HOGENOM" id="CLU_073981_2_0_7"/>
<dbReference type="InParanoid" id="A6Q638"/>
<dbReference type="Proteomes" id="UP000001118">
    <property type="component" value="Chromosome"/>
</dbReference>
<dbReference type="GO" id="GO:0005829">
    <property type="term" value="C:cytosol"/>
    <property type="evidence" value="ECO:0007669"/>
    <property type="project" value="GOC"/>
</dbReference>
<dbReference type="GO" id="GO:0043023">
    <property type="term" value="F:ribosomal large subunit binding"/>
    <property type="evidence" value="ECO:0007669"/>
    <property type="project" value="TreeGrafter"/>
</dbReference>
<dbReference type="GO" id="GO:0002184">
    <property type="term" value="P:cytoplasmic translational termination"/>
    <property type="evidence" value="ECO:0007669"/>
    <property type="project" value="TreeGrafter"/>
</dbReference>
<dbReference type="CDD" id="cd00520">
    <property type="entry name" value="RRF"/>
    <property type="match status" value="1"/>
</dbReference>
<dbReference type="FunFam" id="1.10.132.20:FF:000001">
    <property type="entry name" value="Ribosome-recycling factor"/>
    <property type="match status" value="1"/>
</dbReference>
<dbReference type="FunFam" id="3.30.1360.40:FF:000001">
    <property type="entry name" value="Ribosome-recycling factor"/>
    <property type="match status" value="1"/>
</dbReference>
<dbReference type="Gene3D" id="3.30.1360.40">
    <property type="match status" value="1"/>
</dbReference>
<dbReference type="Gene3D" id="1.10.132.20">
    <property type="entry name" value="Ribosome-recycling factor"/>
    <property type="match status" value="1"/>
</dbReference>
<dbReference type="HAMAP" id="MF_00040">
    <property type="entry name" value="RRF"/>
    <property type="match status" value="1"/>
</dbReference>
<dbReference type="InterPro" id="IPR002661">
    <property type="entry name" value="Ribosome_recyc_fac"/>
</dbReference>
<dbReference type="InterPro" id="IPR023584">
    <property type="entry name" value="Ribosome_recyc_fac_dom"/>
</dbReference>
<dbReference type="InterPro" id="IPR036191">
    <property type="entry name" value="RRF_sf"/>
</dbReference>
<dbReference type="NCBIfam" id="TIGR00496">
    <property type="entry name" value="frr"/>
    <property type="match status" value="1"/>
</dbReference>
<dbReference type="PANTHER" id="PTHR20982:SF3">
    <property type="entry name" value="MITOCHONDRIAL RIBOSOME RECYCLING FACTOR PSEUDO 1"/>
    <property type="match status" value="1"/>
</dbReference>
<dbReference type="PANTHER" id="PTHR20982">
    <property type="entry name" value="RIBOSOME RECYCLING FACTOR"/>
    <property type="match status" value="1"/>
</dbReference>
<dbReference type="Pfam" id="PF01765">
    <property type="entry name" value="RRF"/>
    <property type="match status" value="1"/>
</dbReference>
<dbReference type="SUPFAM" id="SSF55194">
    <property type="entry name" value="Ribosome recycling factor, RRF"/>
    <property type="match status" value="1"/>
</dbReference>
<keyword id="KW-0963">Cytoplasm</keyword>
<keyword id="KW-0648">Protein biosynthesis</keyword>
<keyword id="KW-1185">Reference proteome</keyword>